<organism>
    <name type="scientific">Gloeobacter violaceus (strain ATCC 29082 / PCC 7421)</name>
    <dbReference type="NCBI Taxonomy" id="251221"/>
    <lineage>
        <taxon>Bacteria</taxon>
        <taxon>Bacillati</taxon>
        <taxon>Cyanobacteriota</taxon>
        <taxon>Cyanophyceae</taxon>
        <taxon>Gloeobacterales</taxon>
        <taxon>Gloeobacteraceae</taxon>
        <taxon>Gloeobacter</taxon>
    </lineage>
</organism>
<comment type="function">
    <text evidence="1">Can catalyze the hydrolysis of ATP in the presence of single-stranded DNA, the ATP-dependent uptake of single-stranded DNA by duplex DNA, and the ATP-dependent hybridization of homologous single-stranded DNAs. It interacts with LexA causing its activation and leading to its autocatalytic cleavage.</text>
</comment>
<comment type="subcellular location">
    <subcellularLocation>
        <location evidence="1">Cytoplasm</location>
    </subcellularLocation>
</comment>
<comment type="similarity">
    <text evidence="1">Belongs to the RecA family.</text>
</comment>
<evidence type="ECO:0000255" key="1">
    <source>
        <dbReference type="HAMAP-Rule" id="MF_00268"/>
    </source>
</evidence>
<evidence type="ECO:0000256" key="2">
    <source>
        <dbReference type="SAM" id="MobiDB-lite"/>
    </source>
</evidence>
<feature type="chain" id="PRO_0000122719" description="Protein RecA">
    <location>
        <begin position="1"/>
        <end position="369"/>
    </location>
</feature>
<feature type="region of interest" description="Disordered" evidence="2">
    <location>
        <begin position="1"/>
        <end position="20"/>
    </location>
</feature>
<feature type="region of interest" description="Disordered" evidence="2">
    <location>
        <begin position="350"/>
        <end position="369"/>
    </location>
</feature>
<feature type="compositionally biased region" description="Basic and acidic residues" evidence="2">
    <location>
        <begin position="1"/>
        <end position="10"/>
    </location>
</feature>
<feature type="compositionally biased region" description="Acidic residues" evidence="2">
    <location>
        <begin position="358"/>
        <end position="369"/>
    </location>
</feature>
<feature type="binding site" evidence="1">
    <location>
        <begin position="82"/>
        <end position="89"/>
    </location>
    <ligand>
        <name>ATP</name>
        <dbReference type="ChEBI" id="CHEBI:30616"/>
    </ligand>
</feature>
<dbReference type="EMBL" id="BA000045">
    <property type="protein sequence ID" value="BAC91357.1"/>
    <property type="molecule type" value="Genomic_DNA"/>
</dbReference>
<dbReference type="RefSeq" id="NP_926362.1">
    <property type="nucleotide sequence ID" value="NC_005125.1"/>
</dbReference>
<dbReference type="RefSeq" id="WP_011143405.1">
    <property type="nucleotide sequence ID" value="NC_005125.1"/>
</dbReference>
<dbReference type="SMR" id="Q7NFV8"/>
<dbReference type="STRING" id="251221.gene:10760928"/>
<dbReference type="EnsemblBacteria" id="BAC91357">
    <property type="protein sequence ID" value="BAC91357"/>
    <property type="gene ID" value="BAC91357"/>
</dbReference>
<dbReference type="KEGG" id="gvi:gll3416"/>
<dbReference type="PATRIC" id="fig|251221.4.peg.3450"/>
<dbReference type="eggNOG" id="COG0468">
    <property type="taxonomic scope" value="Bacteria"/>
</dbReference>
<dbReference type="HOGENOM" id="CLU_040469_3_2_3"/>
<dbReference type="InParanoid" id="Q7NFV8"/>
<dbReference type="OrthoDB" id="9776733at2"/>
<dbReference type="PhylomeDB" id="Q7NFV8"/>
<dbReference type="Proteomes" id="UP000000557">
    <property type="component" value="Chromosome"/>
</dbReference>
<dbReference type="GO" id="GO:0005737">
    <property type="term" value="C:cytoplasm"/>
    <property type="evidence" value="ECO:0007669"/>
    <property type="project" value="UniProtKB-SubCell"/>
</dbReference>
<dbReference type="GO" id="GO:0005524">
    <property type="term" value="F:ATP binding"/>
    <property type="evidence" value="ECO:0007669"/>
    <property type="project" value="UniProtKB-UniRule"/>
</dbReference>
<dbReference type="GO" id="GO:0016887">
    <property type="term" value="F:ATP hydrolysis activity"/>
    <property type="evidence" value="ECO:0007669"/>
    <property type="project" value="InterPro"/>
</dbReference>
<dbReference type="GO" id="GO:0140664">
    <property type="term" value="F:ATP-dependent DNA damage sensor activity"/>
    <property type="evidence" value="ECO:0007669"/>
    <property type="project" value="InterPro"/>
</dbReference>
<dbReference type="GO" id="GO:0003684">
    <property type="term" value="F:damaged DNA binding"/>
    <property type="evidence" value="ECO:0007669"/>
    <property type="project" value="UniProtKB-UniRule"/>
</dbReference>
<dbReference type="GO" id="GO:0003697">
    <property type="term" value="F:single-stranded DNA binding"/>
    <property type="evidence" value="ECO:0007669"/>
    <property type="project" value="UniProtKB-UniRule"/>
</dbReference>
<dbReference type="GO" id="GO:0006310">
    <property type="term" value="P:DNA recombination"/>
    <property type="evidence" value="ECO:0007669"/>
    <property type="project" value="UniProtKB-UniRule"/>
</dbReference>
<dbReference type="GO" id="GO:0006281">
    <property type="term" value="P:DNA repair"/>
    <property type="evidence" value="ECO:0007669"/>
    <property type="project" value="UniProtKB-UniRule"/>
</dbReference>
<dbReference type="GO" id="GO:0009432">
    <property type="term" value="P:SOS response"/>
    <property type="evidence" value="ECO:0007669"/>
    <property type="project" value="UniProtKB-UniRule"/>
</dbReference>
<dbReference type="CDD" id="cd00983">
    <property type="entry name" value="RecA"/>
    <property type="match status" value="1"/>
</dbReference>
<dbReference type="FunFam" id="3.40.50.300:FF:000087">
    <property type="entry name" value="Recombinase RecA"/>
    <property type="match status" value="1"/>
</dbReference>
<dbReference type="Gene3D" id="3.40.50.300">
    <property type="entry name" value="P-loop containing nucleotide triphosphate hydrolases"/>
    <property type="match status" value="1"/>
</dbReference>
<dbReference type="HAMAP" id="MF_00268">
    <property type="entry name" value="RecA"/>
    <property type="match status" value="1"/>
</dbReference>
<dbReference type="InterPro" id="IPR003593">
    <property type="entry name" value="AAA+_ATPase"/>
</dbReference>
<dbReference type="InterPro" id="IPR013765">
    <property type="entry name" value="DNA_recomb/repair_RecA"/>
</dbReference>
<dbReference type="InterPro" id="IPR020584">
    <property type="entry name" value="DNA_recomb/repair_RecA_CS"/>
</dbReference>
<dbReference type="InterPro" id="IPR027417">
    <property type="entry name" value="P-loop_NTPase"/>
</dbReference>
<dbReference type="InterPro" id="IPR049261">
    <property type="entry name" value="RecA-like_C"/>
</dbReference>
<dbReference type="InterPro" id="IPR049428">
    <property type="entry name" value="RecA-like_N"/>
</dbReference>
<dbReference type="InterPro" id="IPR020588">
    <property type="entry name" value="RecA_ATP-bd"/>
</dbReference>
<dbReference type="InterPro" id="IPR023400">
    <property type="entry name" value="RecA_C_sf"/>
</dbReference>
<dbReference type="InterPro" id="IPR020587">
    <property type="entry name" value="RecA_monomer-monomer_interface"/>
</dbReference>
<dbReference type="NCBIfam" id="TIGR02012">
    <property type="entry name" value="tigrfam_recA"/>
    <property type="match status" value="1"/>
</dbReference>
<dbReference type="PANTHER" id="PTHR45900:SF1">
    <property type="entry name" value="MITOCHONDRIAL DNA REPAIR PROTEIN RECA HOMOLOG-RELATED"/>
    <property type="match status" value="1"/>
</dbReference>
<dbReference type="PANTHER" id="PTHR45900">
    <property type="entry name" value="RECA"/>
    <property type="match status" value="1"/>
</dbReference>
<dbReference type="Pfam" id="PF00154">
    <property type="entry name" value="RecA"/>
    <property type="match status" value="1"/>
</dbReference>
<dbReference type="Pfam" id="PF21096">
    <property type="entry name" value="RecA_C"/>
    <property type="match status" value="1"/>
</dbReference>
<dbReference type="PRINTS" id="PR00142">
    <property type="entry name" value="RECA"/>
</dbReference>
<dbReference type="SMART" id="SM00382">
    <property type="entry name" value="AAA"/>
    <property type="match status" value="1"/>
</dbReference>
<dbReference type="SUPFAM" id="SSF52540">
    <property type="entry name" value="P-loop containing nucleoside triphosphate hydrolases"/>
    <property type="match status" value="1"/>
</dbReference>
<dbReference type="SUPFAM" id="SSF54752">
    <property type="entry name" value="RecA protein, C-terminal domain"/>
    <property type="match status" value="1"/>
</dbReference>
<dbReference type="PROSITE" id="PS00321">
    <property type="entry name" value="RECA_1"/>
    <property type="match status" value="1"/>
</dbReference>
<dbReference type="PROSITE" id="PS50162">
    <property type="entry name" value="RECA_2"/>
    <property type="match status" value="1"/>
</dbReference>
<dbReference type="PROSITE" id="PS50163">
    <property type="entry name" value="RECA_3"/>
    <property type="match status" value="1"/>
</dbReference>
<name>RECA_GLOVI</name>
<proteinExistence type="inferred from homology"/>
<keyword id="KW-0067">ATP-binding</keyword>
<keyword id="KW-0963">Cytoplasm</keyword>
<keyword id="KW-0227">DNA damage</keyword>
<keyword id="KW-0233">DNA recombination</keyword>
<keyword id="KW-0234">DNA repair</keyword>
<keyword id="KW-0238">DNA-binding</keyword>
<keyword id="KW-0547">Nucleotide-binding</keyword>
<keyword id="KW-1185">Reference proteome</keyword>
<keyword id="KW-0742">SOS response</keyword>
<sequence length="369" mass="39338">MARTTDDSKKAAPAAGTADEAQKQKALKMVLTQIKRNFGEGAIMRLGENTRIRVETVPSGAITLDLALGGGLPRGRVIEIYGPESSGKTTLALHAIAEIQKTGGVAAFVDAEHALDPAYAKVLGVNVDDLIISQPDTGEMAMEIVDQLVRSAAIDVIVIDSVAALVPRAEIEGEMGDAHVGLQARLMSQALRKITGNIGKTGCMVIFLNQLRSKIGVMYGNPETTTGGNALKFYASVRLDIRKAETLKKGQDEYGNRVRVKVVKNKVAPPFRKAEFDIIFGKGISSLGCILDLAVEMEIVERKGAWYSYGSERLGQGRENVLALLEENAAQAQEIEIKVREKIASGAAVPAAAVAAPDEGDDDLGDEEV</sequence>
<gene>
    <name evidence="1" type="primary">recA</name>
    <name type="ordered locus">gll3416</name>
</gene>
<accession>Q7NFV8</accession>
<protein>
    <recommendedName>
        <fullName evidence="1">Protein RecA</fullName>
    </recommendedName>
    <alternativeName>
        <fullName evidence="1">Recombinase A</fullName>
    </alternativeName>
</protein>
<reference key="1">
    <citation type="journal article" date="2003" name="DNA Res.">
        <title>Complete genome structure of Gloeobacter violaceus PCC 7421, a cyanobacterium that lacks thylakoids.</title>
        <authorList>
            <person name="Nakamura Y."/>
            <person name="Kaneko T."/>
            <person name="Sato S."/>
            <person name="Mimuro M."/>
            <person name="Miyashita H."/>
            <person name="Tsuchiya T."/>
            <person name="Sasamoto S."/>
            <person name="Watanabe A."/>
            <person name="Kawashima K."/>
            <person name="Kishida Y."/>
            <person name="Kiyokawa C."/>
            <person name="Kohara M."/>
            <person name="Matsumoto M."/>
            <person name="Matsuno A."/>
            <person name="Nakazaki N."/>
            <person name="Shimpo S."/>
            <person name="Takeuchi C."/>
            <person name="Yamada M."/>
            <person name="Tabata S."/>
        </authorList>
    </citation>
    <scope>NUCLEOTIDE SEQUENCE [LARGE SCALE GENOMIC DNA]</scope>
    <source>
        <strain>ATCC 29082 / PCC 7421</strain>
    </source>
</reference>